<organism>
    <name type="scientific">Escherichia coli O9:H4 (strain HS)</name>
    <dbReference type="NCBI Taxonomy" id="331112"/>
    <lineage>
        <taxon>Bacteria</taxon>
        <taxon>Pseudomonadati</taxon>
        <taxon>Pseudomonadota</taxon>
        <taxon>Gammaproteobacteria</taxon>
        <taxon>Enterobacterales</taxon>
        <taxon>Enterobacteriaceae</taxon>
        <taxon>Escherichia</taxon>
    </lineage>
</organism>
<name>HCAD_ECOHS</name>
<reference key="1">
    <citation type="journal article" date="2008" name="J. Bacteriol.">
        <title>The pangenome structure of Escherichia coli: comparative genomic analysis of E. coli commensal and pathogenic isolates.</title>
        <authorList>
            <person name="Rasko D.A."/>
            <person name="Rosovitz M.J."/>
            <person name="Myers G.S.A."/>
            <person name="Mongodin E.F."/>
            <person name="Fricke W.F."/>
            <person name="Gajer P."/>
            <person name="Crabtree J."/>
            <person name="Sebaihia M."/>
            <person name="Thomson N.R."/>
            <person name="Chaudhuri R."/>
            <person name="Henderson I.R."/>
            <person name="Sperandio V."/>
            <person name="Ravel J."/>
        </authorList>
    </citation>
    <scope>NUCLEOTIDE SEQUENCE [LARGE SCALE GENOMIC DNA]</scope>
    <source>
        <strain>HS</strain>
    </source>
</reference>
<keyword id="KW-0058">Aromatic hydrocarbons catabolism</keyword>
<keyword id="KW-0274">FAD</keyword>
<keyword id="KW-0285">Flavoprotein</keyword>
<keyword id="KW-0520">NAD</keyword>
<keyword id="KW-0560">Oxidoreductase</keyword>
<dbReference type="EC" id="1.18.1.3" evidence="1"/>
<dbReference type="EMBL" id="CP000802">
    <property type="protein sequence ID" value="ABV06952.1"/>
    <property type="molecule type" value="Genomic_DNA"/>
</dbReference>
<dbReference type="RefSeq" id="WP_000660788.1">
    <property type="nucleotide sequence ID" value="NC_009800.1"/>
</dbReference>
<dbReference type="SMR" id="A8A348"/>
<dbReference type="KEGG" id="ecx:EcHS_A2694"/>
<dbReference type="HOGENOM" id="CLU_003291_4_0_6"/>
<dbReference type="UniPathway" id="UPA00714"/>
<dbReference type="GO" id="GO:0005737">
    <property type="term" value="C:cytoplasm"/>
    <property type="evidence" value="ECO:0007669"/>
    <property type="project" value="TreeGrafter"/>
</dbReference>
<dbReference type="GO" id="GO:0008695">
    <property type="term" value="F:3-phenylpropionate dioxygenase activity"/>
    <property type="evidence" value="ECO:0007669"/>
    <property type="project" value="UniProtKB-UniRule"/>
</dbReference>
<dbReference type="GO" id="GO:0008860">
    <property type="term" value="F:ferredoxin-NAD+ reductase activity"/>
    <property type="evidence" value="ECO:0007669"/>
    <property type="project" value="UniProtKB-EC"/>
</dbReference>
<dbReference type="GO" id="GO:0016651">
    <property type="term" value="F:oxidoreductase activity, acting on NAD(P)H"/>
    <property type="evidence" value="ECO:0007669"/>
    <property type="project" value="TreeGrafter"/>
</dbReference>
<dbReference type="GO" id="GO:0019380">
    <property type="term" value="P:3-phenylpropionate catabolic process"/>
    <property type="evidence" value="ECO:0007669"/>
    <property type="project" value="UniProtKB-UniRule"/>
</dbReference>
<dbReference type="FunFam" id="3.30.390.30:FF:000010">
    <property type="entry name" value="3-phenylpropionate/cinnamic acid dioxygenase ferredoxin--NAD(+) reductase component"/>
    <property type="match status" value="1"/>
</dbReference>
<dbReference type="FunFam" id="3.50.50.60:FF:000088">
    <property type="entry name" value="3-phenylpropionate/cinnamic acid dioxygenase ferredoxin--NAD(+) reductase component"/>
    <property type="match status" value="1"/>
</dbReference>
<dbReference type="Gene3D" id="3.30.390.30">
    <property type="match status" value="1"/>
</dbReference>
<dbReference type="Gene3D" id="3.50.50.60">
    <property type="entry name" value="FAD/NAD(P)-binding domain"/>
    <property type="match status" value="2"/>
</dbReference>
<dbReference type="HAMAP" id="MF_01651">
    <property type="entry name" value="HcaD"/>
    <property type="match status" value="1"/>
</dbReference>
<dbReference type="InterPro" id="IPR050446">
    <property type="entry name" value="FAD-oxidoreductase/Apoptosis"/>
</dbReference>
<dbReference type="InterPro" id="IPR036188">
    <property type="entry name" value="FAD/NAD-bd_sf"/>
</dbReference>
<dbReference type="InterPro" id="IPR023753">
    <property type="entry name" value="FAD/NAD-binding_dom"/>
</dbReference>
<dbReference type="InterPro" id="IPR016156">
    <property type="entry name" value="FAD/NAD-linked_Rdtase_dimer_sf"/>
</dbReference>
<dbReference type="InterPro" id="IPR023744">
    <property type="entry name" value="HcaD"/>
</dbReference>
<dbReference type="InterPro" id="IPR028202">
    <property type="entry name" value="Reductase_C"/>
</dbReference>
<dbReference type="InterPro" id="IPR053382">
    <property type="entry name" value="Ring-hydroxylating_dioxygenase"/>
</dbReference>
<dbReference type="NCBIfam" id="NF042949">
    <property type="entry name" value="3PPDioc_HcaD"/>
    <property type="match status" value="1"/>
</dbReference>
<dbReference type="NCBIfam" id="NF007286">
    <property type="entry name" value="PRK09754.1"/>
    <property type="match status" value="1"/>
</dbReference>
<dbReference type="PANTHER" id="PTHR43557">
    <property type="entry name" value="APOPTOSIS-INDUCING FACTOR 1"/>
    <property type="match status" value="1"/>
</dbReference>
<dbReference type="PANTHER" id="PTHR43557:SF2">
    <property type="entry name" value="RIESKE DOMAIN-CONTAINING PROTEIN-RELATED"/>
    <property type="match status" value="1"/>
</dbReference>
<dbReference type="Pfam" id="PF07992">
    <property type="entry name" value="Pyr_redox_2"/>
    <property type="match status" value="1"/>
</dbReference>
<dbReference type="Pfam" id="PF14759">
    <property type="entry name" value="Reductase_C"/>
    <property type="match status" value="1"/>
</dbReference>
<dbReference type="PRINTS" id="PR00368">
    <property type="entry name" value="FADPNR"/>
</dbReference>
<dbReference type="PRINTS" id="PR00411">
    <property type="entry name" value="PNDRDTASEI"/>
</dbReference>
<dbReference type="SUPFAM" id="SSF51905">
    <property type="entry name" value="FAD/NAD(P)-binding domain"/>
    <property type="match status" value="1"/>
</dbReference>
<dbReference type="SUPFAM" id="SSF55424">
    <property type="entry name" value="FAD/NAD-linked reductases, dimerisation (C-terminal) domain"/>
    <property type="match status" value="1"/>
</dbReference>
<proteinExistence type="inferred from homology"/>
<accession>A8A348</accession>
<feature type="chain" id="PRO_0000333726" description="3-phenylpropionate/cinnamic acid dioxygenase ferredoxin--NAD(+) reductase component">
    <location>
        <begin position="1"/>
        <end position="400"/>
    </location>
</feature>
<feature type="binding site" evidence="1">
    <location>
        <begin position="5"/>
        <end position="36"/>
    </location>
    <ligand>
        <name>FAD</name>
        <dbReference type="ChEBI" id="CHEBI:57692"/>
    </ligand>
</feature>
<feature type="binding site" evidence="1">
    <location>
        <begin position="146"/>
        <end position="174"/>
    </location>
    <ligand>
        <name>NAD(+)</name>
        <dbReference type="ChEBI" id="CHEBI:57540"/>
    </ligand>
</feature>
<gene>
    <name evidence="1" type="primary">hcaD</name>
    <name type="ordered locus">EcHS_A2694</name>
</gene>
<comment type="function">
    <text evidence="1">Part of the multicomponent 3-phenylpropionate dioxygenase, that converts 3-phenylpropionic acid (PP) and cinnamic acid (CI) into 3-phenylpropionate-dihydrodiol (PP-dihydrodiol) and cinnamic acid-dihydrodiol (CI-dihydrodiol), respectively.</text>
</comment>
<comment type="catalytic activity">
    <reaction evidence="1">
        <text>2 reduced [2Fe-2S]-[ferredoxin] + NAD(+) + H(+) = 2 oxidized [2Fe-2S]-[ferredoxin] + NADH</text>
        <dbReference type="Rhea" id="RHEA:16521"/>
        <dbReference type="Rhea" id="RHEA-COMP:10000"/>
        <dbReference type="Rhea" id="RHEA-COMP:10001"/>
        <dbReference type="ChEBI" id="CHEBI:15378"/>
        <dbReference type="ChEBI" id="CHEBI:33737"/>
        <dbReference type="ChEBI" id="CHEBI:33738"/>
        <dbReference type="ChEBI" id="CHEBI:57540"/>
        <dbReference type="ChEBI" id="CHEBI:57945"/>
        <dbReference type="EC" id="1.18.1.3"/>
    </reaction>
</comment>
<comment type="cofactor">
    <cofactor evidence="1">
        <name>FAD</name>
        <dbReference type="ChEBI" id="CHEBI:57692"/>
    </cofactor>
</comment>
<comment type="pathway">
    <text evidence="1">Aromatic compound metabolism; 3-phenylpropanoate degradation.</text>
</comment>
<comment type="subunit">
    <text evidence="1">This dioxygenase system consists of four proteins: the two subunits of the hydroxylase component (HcaE and HcaF), a ferredoxin (HcaC) and a ferredoxin reductase (HcaD).</text>
</comment>
<comment type="similarity">
    <text evidence="1">Belongs to the bacterial ring-hydroxylating dioxygenase ferredoxin reductase family.</text>
</comment>
<protein>
    <recommendedName>
        <fullName evidence="1">3-phenylpropionate/cinnamic acid dioxygenase ferredoxin--NAD(+) reductase component</fullName>
        <ecNumber evidence="1">1.18.1.3</ecNumber>
    </recommendedName>
</protein>
<evidence type="ECO:0000255" key="1">
    <source>
        <dbReference type="HAMAP-Rule" id="MF_01651"/>
    </source>
</evidence>
<sequence length="400" mass="43978">MKEKTIIIVGGGQAAAMAAASLRQQGFTGELHLFSDERHLPYERPPLSKSMLLEDSPQLQQVLPANWWQENNVHLHSGVTIKTLGRDTRELVLTNGESWHWDQLFIATGAAARPLPLLDALGERCFTLRHAGDAARLREVLQPERSVVIIGAGTIGLELAASATQRRCKVTVIELAATVMGRNAPPPVQRYLLQRHQQAGVRILLNNAIEHVVDGEKVELTLQSGETLQADVVIYGIGISANEQLAREANLDTANGIVIDEACRTCDPAIFAGGDVAITRLDNGALHRCESWENANNQAQIAAAAMLGLPLPLLPPPWFWSDQYSDNLQFIGDMRGDDWLCRGNPETQKAIWFNLQNGVLIGAVTLNQGREIRPIRKWIQSGKTFDAKLLIDENIALKSL</sequence>